<evidence type="ECO:0000250" key="1">
    <source>
        <dbReference type="UniProtKB" id="A0A455ZMR3"/>
    </source>
</evidence>
<evidence type="ECO:0000250" key="2">
    <source>
        <dbReference type="UniProtKB" id="Q4H424"/>
    </source>
</evidence>
<evidence type="ECO:0000255" key="3">
    <source>
        <dbReference type="PROSITE-ProRule" id="PRU00805"/>
    </source>
</evidence>
<evidence type="ECO:0000269" key="4">
    <source>
    </source>
</evidence>
<evidence type="ECO:0000303" key="5">
    <source>
    </source>
</evidence>
<evidence type="ECO:0000305" key="6"/>
<evidence type="ECO:0000305" key="7">
    <source>
    </source>
</evidence>
<feature type="chain" id="PRO_0000450258" description="2-oxoglutarate-Fe(II) type oxidoreductase ppzD">
    <location>
        <begin position="1"/>
        <end position="353"/>
    </location>
</feature>
<feature type="domain" description="Fe2OG dioxygenase" evidence="3">
    <location>
        <begin position="181"/>
        <end position="292"/>
    </location>
</feature>
<feature type="binding site" evidence="3">
    <location>
        <position position="208"/>
    </location>
    <ligand>
        <name>Fe cation</name>
        <dbReference type="ChEBI" id="CHEBI:24875"/>
    </ligand>
</feature>
<feature type="binding site" evidence="3">
    <location>
        <position position="210"/>
    </location>
    <ligand>
        <name>Fe cation</name>
        <dbReference type="ChEBI" id="CHEBI:24875"/>
    </ligand>
</feature>
<feature type="binding site" evidence="3">
    <location>
        <position position="268"/>
    </location>
    <ligand>
        <name>Fe cation</name>
        <dbReference type="ChEBI" id="CHEBI:24875"/>
    </ligand>
</feature>
<feature type="binding site" evidence="3">
    <location>
        <position position="283"/>
    </location>
    <ligand>
        <name>2-oxoglutarate</name>
        <dbReference type="ChEBI" id="CHEBI:16810"/>
    </ligand>
</feature>
<comment type="function">
    <text evidence="1 2 4">2-oxoglutarate-Fe(II) type oxidoreductase; part of the gene cluster that mediates the biosynthesis of pyrrolopyrazines, secondary metabolites showing insecticidal activity (PubMed:30452111). Within the pathway, ppzD converts L-proline into trans-4-hydroxy-L-proline as a major product, yielding a key precursor for peramine biosynthesis. PpzD is also able to convert L-proline into trans-3-hydroxy-L-proline (By similarity). The single multifunctional NRPS ppzA is sufficient to produce peramine via condensation of 1-pyrroline-5-carboxylate and arginine, N-methylation of the alpha-amino group of arginine and reduction of the thioester and the cyclization to form an iminium ion resulting in release from the peptide synthetase. Deprotonation of this intermediate and oxidation of the pyrroline ring would give rise to peramine (By similarity). In Epichloe species that produce only peramine, the peramine synthetase gene is not localized in a gene cluster, in contrast to Metarhizium species that contain additional pyrrolopyrazine biosynthesis genes. The 2-oxoglutarate-Fe(II) type oxidoreductase ppzC hydroxylates peramine to yield the newly identified compound 8-hydroxyperamine whereas ppzD converts L-proline into trans-4-hydroxy-L-proline, a precursor of peramine biosynthesis (By similarity).</text>
</comment>
<comment type="catalytic activity">
    <reaction evidence="1">
        <text>L-proline + 2-oxoglutarate + O2 = trans-4-hydroxy-L-proline + succinate + CO2</text>
        <dbReference type="Rhea" id="RHEA:51508"/>
        <dbReference type="ChEBI" id="CHEBI:15379"/>
        <dbReference type="ChEBI" id="CHEBI:16526"/>
        <dbReference type="ChEBI" id="CHEBI:16810"/>
        <dbReference type="ChEBI" id="CHEBI:30031"/>
        <dbReference type="ChEBI" id="CHEBI:58375"/>
        <dbReference type="ChEBI" id="CHEBI:60039"/>
        <dbReference type="EC" id="1.14.11.57"/>
    </reaction>
    <physiologicalReaction direction="left-to-right" evidence="1">
        <dbReference type="Rhea" id="RHEA:51509"/>
    </physiologicalReaction>
</comment>
<comment type="catalytic activity">
    <reaction evidence="1">
        <text>L-proline + 2-oxoglutarate + O2 = trans-3-hydroxy-L-proline + succinate + CO2</text>
        <dbReference type="Rhea" id="RHEA:82159"/>
        <dbReference type="ChEBI" id="CHEBI:15379"/>
        <dbReference type="ChEBI" id="CHEBI:16526"/>
        <dbReference type="ChEBI" id="CHEBI:16810"/>
        <dbReference type="ChEBI" id="CHEBI:30031"/>
        <dbReference type="ChEBI" id="CHEBI:57938"/>
        <dbReference type="ChEBI" id="CHEBI:60039"/>
    </reaction>
    <physiologicalReaction direction="left-to-right" evidence="1">
        <dbReference type="Rhea" id="RHEA:82160"/>
    </physiologicalReaction>
</comment>
<comment type="catalytic activity">
    <reaction evidence="1">
        <text>D-proline + 2-oxoglutarate + O2 = cis-4-hydroxy-D-proline + succinate + CO2</text>
        <dbReference type="Rhea" id="RHEA:82163"/>
        <dbReference type="ChEBI" id="CHEBI:15379"/>
        <dbReference type="ChEBI" id="CHEBI:16526"/>
        <dbReference type="ChEBI" id="CHEBI:16810"/>
        <dbReference type="ChEBI" id="CHEBI:30031"/>
        <dbReference type="ChEBI" id="CHEBI:57690"/>
        <dbReference type="ChEBI" id="CHEBI:57726"/>
    </reaction>
    <physiologicalReaction direction="left-to-right" evidence="1">
        <dbReference type="Rhea" id="RHEA:82164"/>
    </physiologicalReaction>
</comment>
<comment type="cofactor">
    <cofactor evidence="3">
        <name>Fe(2+)</name>
        <dbReference type="ChEBI" id="CHEBI:29033"/>
    </cofactor>
    <text evidence="3">Binds 1 Fe(2+) ion per subunit.</text>
</comment>
<comment type="pathway">
    <text evidence="7">Secondary metabolite biosynthesis.</text>
</comment>
<comment type="similarity">
    <text evidence="6">Belongs to the iron/ascorbate-dependent oxidoreductase family.</text>
</comment>
<sequence>MARTPERRVRTLDFAQFCHGEPSSSHGFCRELVDCLRSLGFVKIRNHGISGEEIEKVFVMNKLFFSLPQAAKAKAAHPPEANPHRGYSYVGQEKLSRVKDYEKGKRSIVDVYDIKESYDQGPAVDKLYPNRWPDKQDIPGFRVVMEKFYERCHQVHQDVLRAIATGFDLSPSFLTDLCCENTSELRLNHYPGVHPSSLRKGAKRISEHTDFGTVTLLFQDSVGGLEIEDQNSPGTYFPVSSERKSDMIVNVGDCIQRWTNDKILSTSHRVVLPEDRDALIKDRYSVAYFGKPSRSQLVSPLREFVKEGEKPKYSAISAWQYNQEKLVLTYGGDEEILVPKPSSSVCTGVGQLQ</sequence>
<protein>
    <recommendedName>
        <fullName evidence="5">2-oxoglutarate-Fe(II) type oxidoreductase ppzD</fullName>
        <ecNumber evidence="3">1.14.11.-</ecNumber>
        <ecNumber evidence="1">1.14.11.57</ecNumber>
    </recommendedName>
    <alternativeName>
        <fullName evidence="5">Pyrrolopyrazine biosynthesis cluster protein D</fullName>
    </alternativeName>
</protein>
<accession>A0A166YZY4</accession>
<reference key="1">
    <citation type="journal article" date="2016" name="Genome Biol. Evol.">
        <title>Divergent and convergent evolution of fungal pathogenicity.</title>
        <authorList>
            <person name="Shang Y."/>
            <person name="Xiao G."/>
            <person name="Zheng P."/>
            <person name="Cen K."/>
            <person name="Zhan S."/>
            <person name="Wang C."/>
        </authorList>
    </citation>
    <scope>NUCLEOTIDE SEQUENCE [LARGE SCALE GENOMIC DNA]</scope>
    <source>
        <strain>RCEF 4871</strain>
    </source>
</reference>
<reference key="2">
    <citation type="journal article" date="2019" name="Environ. Microbiol.">
        <title>Orthologous peramine and pyrrolopyrazine-producing biosynthetic gene clusters in Metarhizium rileyi, Metarhizium majus and Cladonia grayi.</title>
        <authorList>
            <person name="Berry D."/>
            <person name="Mace W."/>
            <person name="Rehner S.A."/>
            <person name="Grage K."/>
            <person name="Dijkwel P.P."/>
            <person name="Young C.A."/>
            <person name="Scott B."/>
        </authorList>
    </citation>
    <scope>FUNCTION</scope>
    <scope>PATHWAY</scope>
</reference>
<proteinExistence type="inferred from homology"/>
<name>PPZD_METRR</name>
<gene>
    <name evidence="5" type="primary">ppzD</name>
    <name type="ORF">NOR_07096</name>
</gene>
<keyword id="KW-0223">Dioxygenase</keyword>
<keyword id="KW-0408">Iron</keyword>
<keyword id="KW-0479">Metal-binding</keyword>
<keyword id="KW-0560">Oxidoreductase</keyword>
<keyword id="KW-1185">Reference proteome</keyword>
<organism>
    <name type="scientific">Metarhizium rileyi (strain RCEF 4871)</name>
    <name type="common">Nomuraea rileyi</name>
    <dbReference type="NCBI Taxonomy" id="1649241"/>
    <lineage>
        <taxon>Eukaryota</taxon>
        <taxon>Fungi</taxon>
        <taxon>Dikarya</taxon>
        <taxon>Ascomycota</taxon>
        <taxon>Pezizomycotina</taxon>
        <taxon>Sordariomycetes</taxon>
        <taxon>Hypocreomycetidae</taxon>
        <taxon>Hypocreales</taxon>
        <taxon>Clavicipitaceae</taxon>
        <taxon>Metarhizium</taxon>
    </lineage>
</organism>
<dbReference type="EC" id="1.14.11.-" evidence="3"/>
<dbReference type="EC" id="1.14.11.57" evidence="1"/>
<dbReference type="EMBL" id="AZHC01000030">
    <property type="protein sequence ID" value="OAA37397.1"/>
    <property type="molecule type" value="Genomic_DNA"/>
</dbReference>
<dbReference type="SMR" id="A0A166YZY4"/>
<dbReference type="STRING" id="1081105.A0A166YZY4"/>
<dbReference type="OMA" id="FAKITNH"/>
<dbReference type="OrthoDB" id="288590at2759"/>
<dbReference type="Proteomes" id="UP000243498">
    <property type="component" value="Unassembled WGS sequence"/>
</dbReference>
<dbReference type="GO" id="GO:0051213">
    <property type="term" value="F:dioxygenase activity"/>
    <property type="evidence" value="ECO:0007669"/>
    <property type="project" value="UniProtKB-KW"/>
</dbReference>
<dbReference type="GO" id="GO:0046872">
    <property type="term" value="F:metal ion binding"/>
    <property type="evidence" value="ECO:0007669"/>
    <property type="project" value="UniProtKB-KW"/>
</dbReference>
<dbReference type="GO" id="GO:0044283">
    <property type="term" value="P:small molecule biosynthetic process"/>
    <property type="evidence" value="ECO:0007669"/>
    <property type="project" value="UniProtKB-ARBA"/>
</dbReference>
<dbReference type="Gene3D" id="2.60.120.330">
    <property type="entry name" value="B-lactam Antibiotic, Isopenicillin N Synthase, Chain"/>
    <property type="match status" value="1"/>
</dbReference>
<dbReference type="InterPro" id="IPR026992">
    <property type="entry name" value="DIOX_N"/>
</dbReference>
<dbReference type="InterPro" id="IPR044861">
    <property type="entry name" value="IPNS-like_FE2OG_OXY"/>
</dbReference>
<dbReference type="InterPro" id="IPR027443">
    <property type="entry name" value="IPNS-like_sf"/>
</dbReference>
<dbReference type="InterPro" id="IPR050231">
    <property type="entry name" value="Iron_ascorbate_oxido_reductase"/>
</dbReference>
<dbReference type="InterPro" id="IPR005123">
    <property type="entry name" value="Oxoglu/Fe-dep_dioxygenase_dom"/>
</dbReference>
<dbReference type="PANTHER" id="PTHR47990">
    <property type="entry name" value="2-OXOGLUTARATE (2OG) AND FE(II)-DEPENDENT OXYGENASE SUPERFAMILY PROTEIN-RELATED"/>
    <property type="match status" value="1"/>
</dbReference>
<dbReference type="Pfam" id="PF03171">
    <property type="entry name" value="2OG-FeII_Oxy"/>
    <property type="match status" value="1"/>
</dbReference>
<dbReference type="Pfam" id="PF14226">
    <property type="entry name" value="DIOX_N"/>
    <property type="match status" value="1"/>
</dbReference>
<dbReference type="PRINTS" id="PR00682">
    <property type="entry name" value="IPNSYNTHASE"/>
</dbReference>
<dbReference type="SUPFAM" id="SSF51197">
    <property type="entry name" value="Clavaminate synthase-like"/>
    <property type="match status" value="1"/>
</dbReference>
<dbReference type="PROSITE" id="PS51471">
    <property type="entry name" value="FE2OG_OXY"/>
    <property type="match status" value="1"/>
</dbReference>